<keyword id="KW-0002">3D-structure</keyword>
<keyword id="KW-0903">Direct protein sequencing</keyword>
<keyword id="KW-1015">Disulfide bond</keyword>
<keyword id="KW-0272">Extracellular matrix</keyword>
<keyword id="KW-0325">Glycoprotein</keyword>
<keyword id="KW-0433">Leucine-rich repeat</keyword>
<keyword id="KW-0654">Proteoglycan</keyword>
<keyword id="KW-1185">Reference proteome</keyword>
<keyword id="KW-0677">Repeat</keyword>
<keyword id="KW-0964">Secreted</keyword>
<keyword id="KW-0732">Signal</keyword>
<evidence type="ECO:0000250" key="1">
    <source>
        <dbReference type="UniProtKB" id="P07585"/>
    </source>
</evidence>
<evidence type="ECO:0000250" key="2">
    <source>
        <dbReference type="UniProtKB" id="Q01129"/>
    </source>
</evidence>
<evidence type="ECO:0000269" key="3">
    <source>
    </source>
</evidence>
<evidence type="ECO:0000269" key="4">
    <source>
    </source>
</evidence>
<evidence type="ECO:0000269" key="5">
    <source>
    </source>
</evidence>
<evidence type="ECO:0000269" key="6">
    <source>
    </source>
</evidence>
<evidence type="ECO:0000269" key="7">
    <source>
    </source>
</evidence>
<evidence type="ECO:0000269" key="8">
    <source>
    </source>
</evidence>
<evidence type="ECO:0000269" key="9">
    <source>
    </source>
</evidence>
<evidence type="ECO:0000305" key="10"/>
<evidence type="ECO:0007829" key="11">
    <source>
        <dbReference type="PDB" id="1XKU"/>
    </source>
</evidence>
<accession>P21793</accession>
<accession>Q3MHN1</accession>
<accession>Q5U7W0</accession>
<accession>Q861V7</accession>
<accession>Q862D9</accession>
<accession>Q862E8</accession>
<accession>Q862L4</accession>
<accession>Q862R5</accession>
<protein>
    <recommendedName>
        <fullName>Decorin</fullName>
    </recommendedName>
    <alternativeName>
        <fullName>Bone proteoglycan II</fullName>
    </alternativeName>
    <alternativeName>
        <fullName>PG-S2</fullName>
    </alternativeName>
</protein>
<dbReference type="EMBL" id="Y00712">
    <property type="protein sequence ID" value="CAA68702.1"/>
    <property type="molecule type" value="mRNA"/>
</dbReference>
<dbReference type="EMBL" id="AY781101">
    <property type="protein sequence ID" value="AAV37207.1"/>
    <property type="molecule type" value="mRNA"/>
</dbReference>
<dbReference type="EMBL" id="BT021076">
    <property type="protein sequence ID" value="AAX09093.1"/>
    <property type="molecule type" value="mRNA"/>
</dbReference>
<dbReference type="EMBL" id="BC105175">
    <property type="protein sequence ID" value="AAI05176.1"/>
    <property type="molecule type" value="mRNA"/>
</dbReference>
<dbReference type="EMBL" id="AB098914">
    <property type="protein sequence ID" value="BAC56404.1"/>
    <property type="molecule type" value="mRNA"/>
</dbReference>
<dbReference type="EMBL" id="AB098955">
    <property type="protein sequence ID" value="BAC56445.1"/>
    <property type="molecule type" value="mRNA"/>
</dbReference>
<dbReference type="EMBL" id="AB098968">
    <property type="protein sequence ID" value="BAC56458.1"/>
    <property type="molecule type" value="mRNA"/>
</dbReference>
<dbReference type="EMBL" id="AB099051">
    <property type="protein sequence ID" value="BAC56541.1"/>
    <property type="molecule type" value="mRNA"/>
</dbReference>
<dbReference type="EMBL" id="AB099061">
    <property type="protein sequence ID" value="BAC56551.1"/>
    <property type="molecule type" value="mRNA"/>
</dbReference>
<dbReference type="PIR" id="S06280">
    <property type="entry name" value="S06280"/>
</dbReference>
<dbReference type="RefSeq" id="NP_776331.2">
    <property type="nucleotide sequence ID" value="NM_173906.4"/>
</dbReference>
<dbReference type="RefSeq" id="XP_005206096.1">
    <property type="nucleotide sequence ID" value="XM_005206039.3"/>
</dbReference>
<dbReference type="PDB" id="1XCD">
    <property type="method" value="X-ray"/>
    <property type="resolution" value="2.31 A"/>
    <property type="chains" value="A=31-359"/>
</dbReference>
<dbReference type="PDB" id="1XEC">
    <property type="method" value="X-ray"/>
    <property type="resolution" value="2.30 A"/>
    <property type="chains" value="A/B=31-359"/>
</dbReference>
<dbReference type="PDB" id="1XKU">
    <property type="method" value="X-ray"/>
    <property type="resolution" value="2.15 A"/>
    <property type="chains" value="A=31-360"/>
</dbReference>
<dbReference type="PDBsum" id="1XCD"/>
<dbReference type="PDBsum" id="1XEC"/>
<dbReference type="PDBsum" id="1XKU"/>
<dbReference type="SMR" id="P21793"/>
<dbReference type="CORUM" id="P21793"/>
<dbReference type="FunCoup" id="P21793">
    <property type="interactions" value="431"/>
</dbReference>
<dbReference type="IntAct" id="P21793">
    <property type="interactions" value="1"/>
</dbReference>
<dbReference type="STRING" id="9913.ENSBTAP00000004562"/>
<dbReference type="GlyCosmos" id="P21793">
    <property type="glycosylation" value="4 sites, No reported glycans"/>
</dbReference>
<dbReference type="GlyGen" id="P21793">
    <property type="glycosylation" value="4 sites"/>
</dbReference>
<dbReference type="iPTMnet" id="P21793"/>
<dbReference type="PaxDb" id="9913-ENSBTAP00000004562"/>
<dbReference type="PeptideAtlas" id="P21793"/>
<dbReference type="Ensembl" id="ENSBTAT00000004562.3">
    <property type="protein sequence ID" value="ENSBTAP00000004562.2"/>
    <property type="gene ID" value="ENSBTAG00000003505.7"/>
</dbReference>
<dbReference type="GeneID" id="280760"/>
<dbReference type="KEGG" id="bta:280760"/>
<dbReference type="CTD" id="1634"/>
<dbReference type="VEuPathDB" id="HostDB:ENSBTAG00000003505"/>
<dbReference type="VGNC" id="VGNC:27918">
    <property type="gene designation" value="DCN"/>
</dbReference>
<dbReference type="eggNOG" id="KOG0619">
    <property type="taxonomic scope" value="Eukaryota"/>
</dbReference>
<dbReference type="GeneTree" id="ENSGT00940000158382"/>
<dbReference type="HOGENOM" id="CLU_000288_186_0_1"/>
<dbReference type="InParanoid" id="P21793"/>
<dbReference type="OMA" id="FRCIYER"/>
<dbReference type="OrthoDB" id="1111193at2759"/>
<dbReference type="TreeFam" id="TF334562"/>
<dbReference type="Reactome" id="R-BTA-1474228">
    <property type="pathway name" value="Degradation of the extracellular matrix"/>
</dbReference>
<dbReference type="Reactome" id="R-BTA-1971475">
    <property type="pathway name" value="A tetrasaccharide linker sequence is required for GAG synthesis"/>
</dbReference>
<dbReference type="Reactome" id="R-BTA-2022870">
    <property type="pathway name" value="Chondroitin sulfate biosynthesis"/>
</dbReference>
<dbReference type="Reactome" id="R-BTA-2022923">
    <property type="pathway name" value="Dermatan sulfate biosynthesis"/>
</dbReference>
<dbReference type="Reactome" id="R-BTA-2024101">
    <property type="pathway name" value="CS/DS degradation"/>
</dbReference>
<dbReference type="Reactome" id="R-BTA-3000178">
    <property type="pathway name" value="ECM proteoglycans"/>
</dbReference>
<dbReference type="EvolutionaryTrace" id="P21793"/>
<dbReference type="Proteomes" id="UP000009136">
    <property type="component" value="Chromosome 5"/>
</dbReference>
<dbReference type="Bgee" id="ENSBTAG00000003505">
    <property type="expression patterns" value="Expressed in uterine cervix and 103 other cell types or tissues"/>
</dbReference>
<dbReference type="GO" id="GO:0062023">
    <property type="term" value="C:collagen-containing extracellular matrix"/>
    <property type="evidence" value="ECO:0000314"/>
    <property type="project" value="CAFA"/>
</dbReference>
<dbReference type="GO" id="GO:0005615">
    <property type="term" value="C:extracellular space"/>
    <property type="evidence" value="ECO:0000318"/>
    <property type="project" value="GO_Central"/>
</dbReference>
<dbReference type="GO" id="GO:0098633">
    <property type="term" value="F:collagen fibril binding"/>
    <property type="evidence" value="ECO:0000314"/>
    <property type="project" value="CAFA"/>
</dbReference>
<dbReference type="GO" id="GO:0005539">
    <property type="term" value="F:glycosaminoglycan binding"/>
    <property type="evidence" value="ECO:0007669"/>
    <property type="project" value="Ensembl"/>
</dbReference>
<dbReference type="GO" id="GO:0042803">
    <property type="term" value="F:protein homodimerization activity"/>
    <property type="evidence" value="ECO:0000314"/>
    <property type="project" value="CAFA"/>
</dbReference>
<dbReference type="GO" id="GO:0016525">
    <property type="term" value="P:negative regulation of angiogenesis"/>
    <property type="evidence" value="ECO:0007669"/>
    <property type="project" value="Ensembl"/>
</dbReference>
<dbReference type="GO" id="GO:1904027">
    <property type="term" value="P:negative regulation of collagen fibril organization"/>
    <property type="evidence" value="ECO:0000314"/>
    <property type="project" value="CAFA"/>
</dbReference>
<dbReference type="GO" id="GO:0010596">
    <property type="term" value="P:negative regulation of endothelial cell migration"/>
    <property type="evidence" value="ECO:0007669"/>
    <property type="project" value="Ensembl"/>
</dbReference>
<dbReference type="GO" id="GO:1900747">
    <property type="term" value="P:negative regulation of vascular endothelial growth factor signaling pathway"/>
    <property type="evidence" value="ECO:0007669"/>
    <property type="project" value="Ensembl"/>
</dbReference>
<dbReference type="GO" id="GO:0016239">
    <property type="term" value="P:positive regulation of macroautophagy"/>
    <property type="evidence" value="ECO:0007669"/>
    <property type="project" value="Ensembl"/>
</dbReference>
<dbReference type="GO" id="GO:0051901">
    <property type="term" value="P:positive regulation of mitochondrial depolarization"/>
    <property type="evidence" value="ECO:0007669"/>
    <property type="project" value="Ensembl"/>
</dbReference>
<dbReference type="GO" id="GO:0090141">
    <property type="term" value="P:positive regulation of mitochondrial fission"/>
    <property type="evidence" value="ECO:0007669"/>
    <property type="project" value="Ensembl"/>
</dbReference>
<dbReference type="GO" id="GO:0051897">
    <property type="term" value="P:positive regulation of phosphatidylinositol 3-kinase/protein kinase B signal transduction"/>
    <property type="evidence" value="ECO:0007669"/>
    <property type="project" value="Ensembl"/>
</dbReference>
<dbReference type="GO" id="GO:0045944">
    <property type="term" value="P:positive regulation of transcription by RNA polymerase II"/>
    <property type="evidence" value="ECO:0007669"/>
    <property type="project" value="Ensembl"/>
</dbReference>
<dbReference type="DisProt" id="DP00489"/>
<dbReference type="FunFam" id="3.80.10.10:FF:000038">
    <property type="entry name" value="Biglycan"/>
    <property type="match status" value="1"/>
</dbReference>
<dbReference type="Gene3D" id="3.80.10.10">
    <property type="entry name" value="Ribonuclease Inhibitor"/>
    <property type="match status" value="1"/>
</dbReference>
<dbReference type="InterPro" id="IPR001611">
    <property type="entry name" value="Leu-rich_rpt"/>
</dbReference>
<dbReference type="InterPro" id="IPR003591">
    <property type="entry name" value="Leu-rich_rpt_typical-subtyp"/>
</dbReference>
<dbReference type="InterPro" id="IPR032675">
    <property type="entry name" value="LRR_dom_sf"/>
</dbReference>
<dbReference type="InterPro" id="IPR000372">
    <property type="entry name" value="LRRNT"/>
</dbReference>
<dbReference type="InterPro" id="IPR050333">
    <property type="entry name" value="SLRP"/>
</dbReference>
<dbReference type="InterPro" id="IPR016352">
    <property type="entry name" value="SLRP_I_decor/aspor/byglycan"/>
</dbReference>
<dbReference type="PANTHER" id="PTHR45712">
    <property type="entry name" value="AGAP008170-PA"/>
    <property type="match status" value="1"/>
</dbReference>
<dbReference type="PANTHER" id="PTHR45712:SF14">
    <property type="entry name" value="DECORIN"/>
    <property type="match status" value="1"/>
</dbReference>
<dbReference type="Pfam" id="PF13855">
    <property type="entry name" value="LRR_8"/>
    <property type="match status" value="3"/>
</dbReference>
<dbReference type="Pfam" id="PF01462">
    <property type="entry name" value="LRRNT"/>
    <property type="match status" value="1"/>
</dbReference>
<dbReference type="PIRSF" id="PIRSF002490">
    <property type="entry name" value="SLRP_I"/>
    <property type="match status" value="1"/>
</dbReference>
<dbReference type="SMART" id="SM00364">
    <property type="entry name" value="LRR_BAC"/>
    <property type="match status" value="4"/>
</dbReference>
<dbReference type="SMART" id="SM00369">
    <property type="entry name" value="LRR_TYP"/>
    <property type="match status" value="7"/>
</dbReference>
<dbReference type="SMART" id="SM00013">
    <property type="entry name" value="LRRNT"/>
    <property type="match status" value="1"/>
</dbReference>
<dbReference type="SUPFAM" id="SSF52058">
    <property type="entry name" value="L domain-like"/>
    <property type="match status" value="1"/>
</dbReference>
<dbReference type="PROSITE" id="PS51450">
    <property type="entry name" value="LRR"/>
    <property type="match status" value="8"/>
</dbReference>
<reference key="1">
    <citation type="journal article" date="1987" name="Biochem. J.">
        <title>Molecular cloning and sequence analysis of the cDNA for small proteoglycan II of bovine bone.</title>
        <authorList>
            <person name="Day A.A."/>
            <person name="McQuillan C.I."/>
            <person name="Termine J.D."/>
            <person name="Young M.R."/>
        </authorList>
    </citation>
    <scope>NUCLEOTIDE SEQUENCE [MRNA]</scope>
</reference>
<reference key="2">
    <citation type="submission" date="2004-10" db="EMBL/GenBank/DDBJ databases">
        <title>Sequence of the bovine decorin gene.</title>
        <authorList>
            <person name="Khatib H."/>
        </authorList>
    </citation>
    <scope>NUCLEOTIDE SEQUENCE [MRNA]</scope>
</reference>
<reference key="3">
    <citation type="journal article" date="2005" name="BMC Genomics">
        <title>Characterization of 954 bovine full-CDS cDNA sequences.</title>
        <authorList>
            <person name="Harhay G.P."/>
            <person name="Sonstegard T.S."/>
            <person name="Keele J.W."/>
            <person name="Heaton M.P."/>
            <person name="Clawson M.L."/>
            <person name="Snelling W.M."/>
            <person name="Wiedmann R.T."/>
            <person name="Van Tassell C.P."/>
            <person name="Smith T.P.L."/>
        </authorList>
    </citation>
    <scope>NUCLEOTIDE SEQUENCE [LARGE SCALE MRNA]</scope>
</reference>
<reference key="4">
    <citation type="submission" date="2005-09" db="EMBL/GenBank/DDBJ databases">
        <authorList>
            <consortium name="NIH - Mammalian Gene Collection (MGC) project"/>
        </authorList>
    </citation>
    <scope>NUCLEOTIDE SEQUENCE [LARGE SCALE MRNA]</scope>
    <source>
        <strain>Hereford</strain>
        <tissue>Testis</tissue>
    </source>
</reference>
<reference key="5">
    <citation type="journal article" date="2003" name="Mol. Reprod. Dev.">
        <title>Characterization of gene expression profiles in early bovine pregnancy using a custom cDNA microarray.</title>
        <authorList>
            <person name="Ishiwata H."/>
            <person name="Katsuma S."/>
            <person name="Kizaki K."/>
            <person name="Patel O.V."/>
            <person name="Nakano H."/>
            <person name="Takahashi T."/>
            <person name="Imai K."/>
            <person name="Hirasawa A."/>
            <person name="Shiojima S."/>
            <person name="Ikawa H."/>
            <person name="Suzuki Y."/>
            <person name="Tsujimoto G."/>
            <person name="Izaike Y."/>
            <person name="Todoroki J."/>
            <person name="Hashizume K."/>
        </authorList>
    </citation>
    <scope>NUCLEOTIDE SEQUENCE [LARGE SCALE MRNA] OF 1-126 AND 214-360</scope>
</reference>
<reference key="6">
    <citation type="journal article" date="1989" name="J. Biol. Chem.">
        <title>Characterization of the dermatan sulfate proteoglycans, DS-PGI and DS-PGII, from bovine articular cartilage and skin isolated by octyl-sepharose chromatography.</title>
        <authorList>
            <person name="Choi H.U."/>
            <person name="Johnson T.L."/>
            <person name="Pal S."/>
            <person name="Tang L.H."/>
            <person name="Rosenberg L.C."/>
            <person name="Neame P.J."/>
        </authorList>
    </citation>
    <scope>PROTEIN SEQUENCE OF 31-54</scope>
</reference>
<reference key="7">
    <citation type="journal article" date="1983" name="J. Biol. Chem.">
        <title>The NH2-terminal amino acid sequence of bovine skin proteodermatan sulfate.</title>
        <authorList>
            <person name="Pearson C.H."/>
            <person name="Winterbottom N."/>
            <person name="Fackre D.S."/>
            <person name="Scott P.G."/>
            <person name="Carpenter M.R."/>
        </authorList>
    </citation>
    <scope>GLYCOSYLATION AT SER-34</scope>
</reference>
<reference key="8">
    <citation type="journal article" date="1985" name="Biochem. J.">
        <title>Dermatan sulphate is located on serine-4 of bovine skin proteodermatan sulphate. Demonstration that most molecules possess only one glycosaminoglycan chain and comparison of amino acid sequences around glycosylation sites in different proteoglycans.</title>
        <authorList>
            <person name="Chopra R.K."/>
            <person name="Pearson C.H."/>
            <person name="Pringle G.A."/>
            <person name="Fackre D.S."/>
            <person name="Scott P.G."/>
        </authorList>
    </citation>
    <scope>GLYCOSYLATION AT SER-34</scope>
</reference>
<reference key="9">
    <citation type="journal article" date="1996" name="J. Biochem.">
        <title>Extracellular matrix 22-kDa protein interacts with decorin core protein and is expressed in cutaneous fibrosis.</title>
        <authorList>
            <person name="Okamoto O."/>
            <person name="Suzuki Y."/>
            <person name="Kimura S."/>
            <person name="Shinkai H."/>
        </authorList>
    </citation>
    <scope>INTERACTION WITH DPT</scope>
</reference>
<reference key="10">
    <citation type="journal article" date="1999" name="Biochem. J.">
        <title>Dermatopontin interacts with transforming growth factor beta and enhances its biological activity.</title>
        <authorList>
            <person name="Okamoto O."/>
            <person name="Fujiwara S."/>
            <person name="Abe M."/>
            <person name="Sato Y."/>
        </authorList>
    </citation>
    <scope>INTERACTION WITH DPT</scope>
</reference>
<reference key="11">
    <citation type="journal article" date="2002" name="J. Biol. Chem.">
        <title>Molecular interactions of biglycan and decorin with elastic fiber components: biglycan forms a ternary complex with tropoelastin and microfibril-associated glycoprotein 1.</title>
        <authorList>
            <person name="Reinboth B."/>
            <person name="Hanssen E."/>
            <person name="Cleary E.G."/>
            <person name="Gibson M.A."/>
        </authorList>
    </citation>
    <scope>INTERACTION WITH MFAP2 AND ELN</scope>
</reference>
<reference key="12">
    <citation type="journal article" date="2004" name="Proc. Natl. Acad. Sci. U.S.A.">
        <title>Crystal structure of the dimeric protein core of decorin, the archetypal small leucine-rich repeat proteoglycan.</title>
        <authorList>
            <person name="Scott P.G."/>
            <person name="McEwan P.A."/>
            <person name="Dodd C.M."/>
            <person name="Bergmann E.M."/>
            <person name="Bishop P.N."/>
            <person name="Bella J."/>
        </authorList>
    </citation>
    <scope>X-RAY CRYSTALLOGRAPHY (2.15 ANGSTROMS) OF 31-360</scope>
    <scope>DISULFIDE BONDS</scope>
    <scope>GLYCOSYLATION AT ASN-212; ASN-263 AND ASN-304</scope>
</reference>
<organism>
    <name type="scientific">Bos taurus</name>
    <name type="common">Bovine</name>
    <dbReference type="NCBI Taxonomy" id="9913"/>
    <lineage>
        <taxon>Eukaryota</taxon>
        <taxon>Metazoa</taxon>
        <taxon>Chordata</taxon>
        <taxon>Craniata</taxon>
        <taxon>Vertebrata</taxon>
        <taxon>Euteleostomi</taxon>
        <taxon>Mammalia</taxon>
        <taxon>Eutheria</taxon>
        <taxon>Laurasiatheria</taxon>
        <taxon>Artiodactyla</taxon>
        <taxon>Ruminantia</taxon>
        <taxon>Pecora</taxon>
        <taxon>Bovidae</taxon>
        <taxon>Bovinae</taxon>
        <taxon>Bos</taxon>
    </lineage>
</organism>
<comment type="function">
    <text>May affect the rate of fibrils formation.</text>
</comment>
<comment type="subunit">
    <text evidence="3 8 9">Binds to type I and type II collagen, fibronectin and TGF-beta. Forms a ternary complex with MFAP2 and ELN. Interacts with DPT.</text>
</comment>
<comment type="subcellular location">
    <subcellularLocation>
        <location>Secreted</location>
        <location>Extracellular space</location>
        <location>Extracellular matrix</location>
    </subcellularLocation>
    <subcellularLocation>
        <location evidence="1">Secreted</location>
    </subcellularLocation>
</comment>
<comment type="PTM">
    <text>The attached glycosaminoglycan chain can be either chondroitin 4-sulfate, chondroitin 6-sulfate or dermatan sulfate, depending upon the tissue of origin.</text>
</comment>
<comment type="similarity">
    <text evidence="10">Belongs to the small leucine-rich proteoglycan (SLRP) family. SLRP class I subfamily.</text>
</comment>
<feature type="signal peptide" evidence="2">
    <location>
        <begin position="1"/>
        <end position="16"/>
    </location>
</feature>
<feature type="propeptide" id="PRO_0000032703" evidence="5">
    <location>
        <begin position="17"/>
        <end position="30"/>
    </location>
</feature>
<feature type="chain" id="PRO_0000032704" description="Decorin">
    <location>
        <begin position="31"/>
        <end position="360"/>
    </location>
</feature>
<feature type="repeat" description="LRR 1">
    <location>
        <begin position="74"/>
        <end position="94"/>
    </location>
</feature>
<feature type="repeat" description="LRR 2">
    <location>
        <begin position="95"/>
        <end position="118"/>
    </location>
</feature>
<feature type="repeat" description="LRR 3">
    <location>
        <begin position="119"/>
        <end position="142"/>
    </location>
</feature>
<feature type="repeat" description="LRR 4">
    <location>
        <begin position="143"/>
        <end position="163"/>
    </location>
</feature>
<feature type="repeat" description="LRR 5">
    <location>
        <begin position="164"/>
        <end position="187"/>
    </location>
</feature>
<feature type="repeat" description="LRR 6">
    <location>
        <begin position="188"/>
        <end position="213"/>
    </location>
</feature>
<feature type="repeat" description="LRR 7">
    <location>
        <begin position="214"/>
        <end position="234"/>
    </location>
</feature>
<feature type="repeat" description="LRR 8">
    <location>
        <begin position="235"/>
        <end position="258"/>
    </location>
</feature>
<feature type="repeat" description="LRR 9">
    <location>
        <begin position="259"/>
        <end position="282"/>
    </location>
</feature>
<feature type="repeat" description="LRR 10">
    <location>
        <begin position="283"/>
        <end position="305"/>
    </location>
</feature>
<feature type="repeat" description="LRR 11">
    <location>
        <begin position="306"/>
        <end position="335"/>
    </location>
</feature>
<feature type="repeat" description="LRR 12">
    <location>
        <begin position="336"/>
        <end position="360"/>
    </location>
</feature>
<feature type="glycosylation site" description="O-linked (Xyl...) (glycosaminoglycan) serine" evidence="6 7">
    <location>
        <position position="34"/>
    </location>
</feature>
<feature type="glycosylation site" description="N-linked (GlcNAc...) asparagine" evidence="4">
    <location>
        <position position="212"/>
    </location>
</feature>
<feature type="glycosylation site" description="N-linked (GlcNAc...) asparagine" evidence="4">
    <location>
        <position position="263"/>
    </location>
</feature>
<feature type="glycosylation site" description="N-linked (GlcNAc...) asparagine" evidence="4">
    <location>
        <position position="304"/>
    </location>
</feature>
<feature type="disulfide bond" evidence="4">
    <location>
        <begin position="55"/>
        <end position="61"/>
    </location>
</feature>
<feature type="disulfide bond" evidence="4">
    <location>
        <begin position="59"/>
        <end position="68"/>
    </location>
</feature>
<feature type="disulfide bond" evidence="4">
    <location>
        <begin position="314"/>
        <end position="347"/>
    </location>
</feature>
<feature type="sequence conflict" description="In Ref. 1; CAA68702." evidence="10" ref="1">
    <original>V</original>
    <variation>A</variation>
    <location>
        <position position="283"/>
    </location>
</feature>
<feature type="sequence conflict" description="In Ref. 1; CAA68702." evidence="10" ref="1">
    <original>L</original>
    <variation>V</variation>
    <location>
        <position position="289"/>
    </location>
</feature>
<feature type="sequence conflict" description="In Ref. 5; BAC56458." evidence="10" ref="5">
    <original>IGS</original>
    <variation>NRL</variation>
    <location>
        <begin position="308"/>
        <end position="310"/>
    </location>
</feature>
<feature type="strand" evidence="11">
    <location>
        <begin position="60"/>
        <end position="62"/>
    </location>
</feature>
<feature type="strand" evidence="11">
    <location>
        <begin position="65"/>
        <end position="67"/>
    </location>
</feature>
<feature type="strand" evidence="11">
    <location>
        <begin position="86"/>
        <end position="88"/>
    </location>
</feature>
<feature type="turn" evidence="11">
    <location>
        <begin position="99"/>
        <end position="104"/>
    </location>
</feature>
<feature type="strand" evidence="11">
    <location>
        <begin position="110"/>
        <end position="112"/>
    </location>
</feature>
<feature type="turn" evidence="11">
    <location>
        <begin position="123"/>
        <end position="128"/>
    </location>
</feature>
<feature type="strand" evidence="11">
    <location>
        <begin position="134"/>
        <end position="136"/>
    </location>
</feature>
<feature type="strand" evidence="11">
    <location>
        <begin position="155"/>
        <end position="157"/>
    </location>
</feature>
<feature type="helix" evidence="11">
    <location>
        <begin position="168"/>
        <end position="171"/>
    </location>
</feature>
<feature type="strand" evidence="11">
    <location>
        <begin position="179"/>
        <end position="181"/>
    </location>
</feature>
<feature type="helix" evidence="11">
    <location>
        <begin position="189"/>
        <end position="191"/>
    </location>
</feature>
<feature type="helix" evidence="11">
    <location>
        <begin position="196"/>
        <end position="199"/>
    </location>
</feature>
<feature type="strand" evidence="11">
    <location>
        <begin position="205"/>
        <end position="207"/>
    </location>
</feature>
<feature type="strand" evidence="11">
    <location>
        <begin position="225"/>
        <end position="228"/>
    </location>
</feature>
<feature type="helix" evidence="11">
    <location>
        <begin position="240"/>
        <end position="242"/>
    </location>
</feature>
<feature type="strand" evidence="11">
    <location>
        <begin position="250"/>
        <end position="252"/>
    </location>
</feature>
<feature type="turn" evidence="11">
    <location>
        <begin position="263"/>
        <end position="265"/>
    </location>
</feature>
<feature type="helix" evidence="11">
    <location>
        <begin position="266"/>
        <end position="268"/>
    </location>
</feature>
<feature type="strand" evidence="11">
    <location>
        <begin position="274"/>
        <end position="276"/>
    </location>
</feature>
<feature type="turn" evidence="11">
    <location>
        <begin position="287"/>
        <end position="291"/>
    </location>
</feature>
<feature type="strand" evidence="11">
    <location>
        <begin position="297"/>
        <end position="299"/>
    </location>
</feature>
<feature type="strand" evidence="11">
    <location>
        <begin position="312"/>
        <end position="314"/>
    </location>
</feature>
<feature type="strand" evidence="11">
    <location>
        <begin position="326"/>
        <end position="329"/>
    </location>
</feature>
<feature type="strand" evidence="11">
    <location>
        <begin position="332"/>
        <end position="335"/>
    </location>
</feature>
<feature type="helix" evidence="11">
    <location>
        <begin position="337"/>
        <end position="339"/>
    </location>
</feature>
<feature type="helix" evidence="11">
    <location>
        <begin position="342"/>
        <end position="345"/>
    </location>
</feature>
<feature type="helix" evidence="11">
    <location>
        <begin position="351"/>
        <end position="353"/>
    </location>
</feature>
<name>PGS2_BOVIN</name>
<proteinExistence type="evidence at protein level"/>
<gene>
    <name type="primary">DCN</name>
</gene>
<sequence length="360" mass="39879">MKATIIFLLVAQVSWAGPFQQKGLFDFMLEDEASGIGPEEHFPEVPEIEPMGPVCPFRCQCHLRVVQCSDLGLEKVPKDLPPDTALLDLQNNKITEIKDGDFKNLKNLHTLILINNKISKISPGAFAPLVKLERLYLSKNQLKELPEKMPKTLQELRVHENEITKVRKSVFNGLNQMIVVELGTNPLKSSGIENGAFQGMKKLSYIRIADTNITTIPQGLPPSLTELHLDGNKITKVDAASLKGLNNLAKLGLSFNSISAVDNGSLANTPHLRELHLNNNKLVKVPGGLADHKYIQVVYLHNNNISAIGSNDFCPPGYNTKKASYSGVSLFSNPVQYWEIQPSTFRCVYVRAAVQLGNYK</sequence>